<gene>
    <name type="ordered locus">SEQ_2141</name>
</gene>
<protein>
    <recommendedName>
        <fullName evidence="1">UPF0246 protein SEQ_2141</fullName>
    </recommendedName>
</protein>
<reference key="1">
    <citation type="journal article" date="2009" name="PLoS Pathog.">
        <title>Genomic evidence for the evolution of Streptococcus equi: host restriction, increased virulence, and genetic exchange with human pathogens.</title>
        <authorList>
            <person name="Holden M.T.G."/>
            <person name="Heather Z."/>
            <person name="Paillot R."/>
            <person name="Steward K.F."/>
            <person name="Webb K."/>
            <person name="Ainslie F."/>
            <person name="Jourdan T."/>
            <person name="Bason N.C."/>
            <person name="Holroyd N.E."/>
            <person name="Mungall K."/>
            <person name="Quail M.A."/>
            <person name="Sanders M."/>
            <person name="Simmonds M."/>
            <person name="Willey D."/>
            <person name="Brooks K."/>
            <person name="Aanensen D.M."/>
            <person name="Spratt B.G."/>
            <person name="Jolley K.A."/>
            <person name="Maiden M.C.J."/>
            <person name="Kehoe M."/>
            <person name="Chanter N."/>
            <person name="Bentley S.D."/>
            <person name="Robinson C."/>
            <person name="Maskell D.J."/>
            <person name="Parkhill J."/>
            <person name="Waller A.S."/>
        </authorList>
    </citation>
    <scope>NUCLEOTIDE SEQUENCE [LARGE SCALE GENOMIC DNA]</scope>
    <source>
        <strain>4047</strain>
    </source>
</reference>
<evidence type="ECO:0000255" key="1">
    <source>
        <dbReference type="HAMAP-Rule" id="MF_00652"/>
    </source>
</evidence>
<name>Y2141_STRE4</name>
<comment type="similarity">
    <text evidence="1">Belongs to the UPF0246 family.</text>
</comment>
<sequence>MLTFLIPTAKEMKPVPPCYPHQLPQKSLPILEAMAELSLEELARAYSIRIEAASKEAKRLKAIAQGQSSAYPAYQLFNGLMYRHLKRDNLSKDQQDYLSKQVYITSSFYGIIPTDEKIAEHRHDFHTKVTINGQSLKHYWRPIYDQFAKDHKQIISLLSNEFRDVFSKEYQKLWISPKFMEERSGQLKTHSTISKKARGAFLTACLENNVQTKEALKQLSFAGFCYNEELSTETNYYYIKKES</sequence>
<dbReference type="EMBL" id="FM204883">
    <property type="protein sequence ID" value="CAW95496.1"/>
    <property type="molecule type" value="Genomic_DNA"/>
</dbReference>
<dbReference type="SMR" id="C0MAQ5"/>
<dbReference type="KEGG" id="seu:SEQ_2141"/>
<dbReference type="HOGENOM" id="CLU_061989_2_1_9"/>
<dbReference type="OrthoDB" id="9777133at2"/>
<dbReference type="Proteomes" id="UP000001365">
    <property type="component" value="Chromosome"/>
</dbReference>
<dbReference type="GO" id="GO:0005829">
    <property type="term" value="C:cytosol"/>
    <property type="evidence" value="ECO:0007669"/>
    <property type="project" value="TreeGrafter"/>
</dbReference>
<dbReference type="GO" id="GO:0033194">
    <property type="term" value="P:response to hydroperoxide"/>
    <property type="evidence" value="ECO:0007669"/>
    <property type="project" value="TreeGrafter"/>
</dbReference>
<dbReference type="HAMAP" id="MF_00652">
    <property type="entry name" value="UPF0246"/>
    <property type="match status" value="1"/>
</dbReference>
<dbReference type="InterPro" id="IPR005583">
    <property type="entry name" value="YaaA"/>
</dbReference>
<dbReference type="NCBIfam" id="NF002543">
    <property type="entry name" value="PRK02101.1-4"/>
    <property type="match status" value="1"/>
</dbReference>
<dbReference type="PANTHER" id="PTHR30283:SF4">
    <property type="entry name" value="PEROXIDE STRESS RESISTANCE PROTEIN YAAA"/>
    <property type="match status" value="1"/>
</dbReference>
<dbReference type="PANTHER" id="PTHR30283">
    <property type="entry name" value="PEROXIDE STRESS RESPONSE PROTEIN YAAA"/>
    <property type="match status" value="1"/>
</dbReference>
<dbReference type="Pfam" id="PF03883">
    <property type="entry name" value="H2O2_YaaD"/>
    <property type="match status" value="1"/>
</dbReference>
<organism>
    <name type="scientific">Streptococcus equi subsp. equi (strain 4047)</name>
    <dbReference type="NCBI Taxonomy" id="553482"/>
    <lineage>
        <taxon>Bacteria</taxon>
        <taxon>Bacillati</taxon>
        <taxon>Bacillota</taxon>
        <taxon>Bacilli</taxon>
        <taxon>Lactobacillales</taxon>
        <taxon>Streptococcaceae</taxon>
        <taxon>Streptococcus</taxon>
    </lineage>
</organism>
<feature type="chain" id="PRO_1000200426" description="UPF0246 protein SEQ_2141">
    <location>
        <begin position="1"/>
        <end position="243"/>
    </location>
</feature>
<proteinExistence type="inferred from homology"/>
<accession>C0MAQ5</accession>